<reference evidence="5 6" key="1">
    <citation type="journal article" date="2004" name="Insect Biochem. Mol. Biol.">
        <title>Towards a comprehensive view of the primary structure of venom proteins from the parasitoid wasp Pimpla hypochondriaca.</title>
        <authorList>
            <person name="Parkinson N.M."/>
            <person name="Conyers C."/>
            <person name="Keen J."/>
            <person name="MacNicoll A."/>
            <person name="Smith I."/>
            <person name="Audsley N."/>
            <person name="Weaver R."/>
        </authorList>
    </citation>
    <scope>NUCLEOTIDE SEQUENCE [MRNA]</scope>
    <scope>PROTEIN SEQUENCE OF 23-27</scope>
    <source>
        <tissue evidence="4">Venom</tissue>
        <tissue evidence="4">Venom gland</tissue>
    </source>
</reference>
<dbReference type="EMBL" id="AJ438996">
    <property type="protein sequence ID" value="CAD27741.1"/>
    <property type="molecule type" value="mRNA"/>
</dbReference>
<dbReference type="GO" id="GO:0005576">
    <property type="term" value="C:extracellular region"/>
    <property type="evidence" value="ECO:0007669"/>
    <property type="project" value="UniProtKB-SubCell"/>
</dbReference>
<organism>
    <name type="scientific">Pimpla hypochondriaca</name>
    <name type="common">Parasitoid wasp</name>
    <dbReference type="NCBI Taxonomy" id="135724"/>
    <lineage>
        <taxon>Eukaryota</taxon>
        <taxon>Metazoa</taxon>
        <taxon>Ecdysozoa</taxon>
        <taxon>Arthropoda</taxon>
        <taxon>Hexapoda</taxon>
        <taxon>Insecta</taxon>
        <taxon>Pterygota</taxon>
        <taxon>Neoptera</taxon>
        <taxon>Endopterygota</taxon>
        <taxon>Hymenoptera</taxon>
        <taxon>Apocrita</taxon>
        <taxon>Ichneumonoidea</taxon>
        <taxon>Ichneumonidae</taxon>
        <taxon>Pimplinae</taxon>
        <taxon>Pimplini</taxon>
        <taxon>Pimpla</taxon>
    </lineage>
</organism>
<evidence type="ECO:0000250" key="1"/>
<evidence type="ECO:0000255" key="2"/>
<evidence type="ECO:0000256" key="3">
    <source>
        <dbReference type="SAM" id="MobiDB-lite"/>
    </source>
</evidence>
<evidence type="ECO:0000269" key="4">
    <source>
    </source>
</evidence>
<evidence type="ECO:0000305" key="5"/>
<evidence type="ECO:0000312" key="6">
    <source>
        <dbReference type="EMBL" id="CAD27741.1"/>
    </source>
</evidence>
<keyword id="KW-0903">Direct protein sequencing</keyword>
<keyword id="KW-1015">Disulfide bond</keyword>
<keyword id="KW-0960">Knottin</keyword>
<keyword id="KW-0964">Secreted</keyword>
<keyword id="KW-0732">Signal</keyword>
<name>CVP5_PIMHY</name>
<feature type="signal peptide" evidence="2 4">
    <location>
        <begin position="1"/>
        <end position="22"/>
    </location>
</feature>
<feature type="chain" id="PRO_0000021049" description="Cysteine-rich venom protein 5" evidence="2 4">
    <location>
        <begin position="23"/>
        <end position="115"/>
    </location>
</feature>
<feature type="region of interest" description="Disordered" evidence="3">
    <location>
        <begin position="54"/>
        <end position="115"/>
    </location>
</feature>
<feature type="compositionally biased region" description="Basic residues" evidence="3">
    <location>
        <begin position="68"/>
        <end position="77"/>
    </location>
</feature>
<feature type="compositionally biased region" description="Basic residues" evidence="3">
    <location>
        <begin position="86"/>
        <end position="115"/>
    </location>
</feature>
<feature type="disulfide bond" evidence="1">
    <location>
        <begin position="26"/>
        <end position="41"/>
    </location>
</feature>
<feature type="disulfide bond" evidence="1">
    <location>
        <begin position="33"/>
        <end position="44"/>
    </location>
</feature>
<feature type="disulfide bond" evidence="1">
    <location>
        <begin position="40"/>
        <end position="51"/>
    </location>
</feature>
<comment type="subcellular location">
    <subcellularLocation>
        <location evidence="4">Secreted</location>
    </subcellularLocation>
</comment>
<comment type="tissue specificity">
    <text evidence="4">Expressed by the venom gland.</text>
</comment>
<comment type="domain">
    <text evidence="1">The presence of a 'disulfide through disulfide knot' structurally defines this protein as a knottin.</text>
</comment>
<proteinExistence type="evidence at protein level"/>
<protein>
    <recommendedName>
        <fullName>Cysteine-rich venom protein 5</fullName>
        <shortName>cvp5</shortName>
    </recommendedName>
</protein>
<sequence length="115" mass="12678">MSKVMIIMLVGMIFAIISTVSGGAGCSSMGASCQIGSATCCGVCNVHTLRCEARIGPPINTQPTRRTQPTRRTRGPKVTRSSRPTNRTRRPKPTNRSRRPKPTHRRKPTNRPRSH</sequence>
<accession>Q8T0W1</accession>